<feature type="signal peptide" evidence="2">
    <location>
        <begin position="1"/>
        <end position="13"/>
    </location>
</feature>
<feature type="chain" id="PRO_0000031729" description="Autoinducer 2-binding periplasmic protein LuxP">
    <location>
        <begin position="14"/>
        <end position="366"/>
    </location>
</feature>
<organism>
    <name type="scientific">Vibrio vulnificus (strain YJ016)</name>
    <dbReference type="NCBI Taxonomy" id="196600"/>
    <lineage>
        <taxon>Bacteria</taxon>
        <taxon>Pseudomonadati</taxon>
        <taxon>Pseudomonadota</taxon>
        <taxon>Gammaproteobacteria</taxon>
        <taxon>Vibrionales</taxon>
        <taxon>Vibrionaceae</taxon>
        <taxon>Vibrio</taxon>
    </lineage>
</organism>
<comment type="function">
    <text evidence="1">Binds to an autoinducer molecule. This complex then interacts with the LuxQ sensor protein (By similarity).</text>
</comment>
<comment type="subcellular location">
    <subcellularLocation>
        <location evidence="3">Periplasm</location>
    </subcellularLocation>
</comment>
<comment type="similarity">
    <text evidence="3">Belongs to the bacterial solute-binding protein 2 family.</text>
</comment>
<gene>
    <name type="primary">luxP</name>
    <name type="ordered locus">VVA1221</name>
</gene>
<reference key="1">
    <citation type="journal article" date="2003" name="Genome Res.">
        <title>Comparative genome analysis of Vibrio vulnificus, a marine pathogen.</title>
        <authorList>
            <person name="Chen C.-Y."/>
            <person name="Wu K.-M."/>
            <person name="Chang Y.-C."/>
            <person name="Chang C.-H."/>
            <person name="Tsai H.-C."/>
            <person name="Liao T.-L."/>
            <person name="Liu Y.-M."/>
            <person name="Chen H.-J."/>
            <person name="Shen A.B.-T."/>
            <person name="Li J.-C."/>
            <person name="Su T.-L."/>
            <person name="Shao C.-P."/>
            <person name="Lee C.-T."/>
            <person name="Hor L.-I."/>
            <person name="Tsai S.-F."/>
        </authorList>
    </citation>
    <scope>NUCLEOTIDE SEQUENCE [LARGE SCALE GENOMIC DNA]</scope>
    <source>
        <strain>YJ016</strain>
    </source>
</reference>
<evidence type="ECO:0000250" key="1"/>
<evidence type="ECO:0000255" key="2"/>
<evidence type="ECO:0000305" key="3"/>
<dbReference type="EMBL" id="BA000038">
    <property type="protein sequence ID" value="BAC97247.1"/>
    <property type="molecule type" value="Genomic_DNA"/>
</dbReference>
<dbReference type="RefSeq" id="WP_011152474.1">
    <property type="nucleotide sequence ID" value="NC_005140.1"/>
</dbReference>
<dbReference type="SMR" id="Q7MD15"/>
<dbReference type="STRING" id="672.VV93_v1c41470"/>
<dbReference type="KEGG" id="vvy:VVA1221"/>
<dbReference type="PATRIC" id="fig|196600.6.peg.4376"/>
<dbReference type="eggNOG" id="COG1879">
    <property type="taxonomic scope" value="Bacteria"/>
</dbReference>
<dbReference type="HOGENOM" id="CLU_064743_1_0_6"/>
<dbReference type="Proteomes" id="UP000002675">
    <property type="component" value="Chromosome II"/>
</dbReference>
<dbReference type="GO" id="GO:0042597">
    <property type="term" value="C:periplasmic space"/>
    <property type="evidence" value="ECO:0007669"/>
    <property type="project" value="UniProtKB-SubCell"/>
</dbReference>
<dbReference type="GO" id="GO:0030246">
    <property type="term" value="F:carbohydrate binding"/>
    <property type="evidence" value="ECO:0007669"/>
    <property type="project" value="UniProtKB-ARBA"/>
</dbReference>
<dbReference type="CDD" id="cd06303">
    <property type="entry name" value="PBP1_LuxPQ_Quorum_Sensing"/>
    <property type="match status" value="1"/>
</dbReference>
<dbReference type="Gene3D" id="3.40.50.2300">
    <property type="match status" value="2"/>
</dbReference>
<dbReference type="InterPro" id="IPR028082">
    <property type="entry name" value="Peripla_BP_I"/>
</dbReference>
<dbReference type="InterPro" id="IPR025997">
    <property type="entry name" value="SBP_2_dom"/>
</dbReference>
<dbReference type="PANTHER" id="PTHR46847">
    <property type="entry name" value="D-ALLOSE-BINDING PERIPLASMIC PROTEIN-RELATED"/>
    <property type="match status" value="1"/>
</dbReference>
<dbReference type="PANTHER" id="PTHR46847:SF1">
    <property type="entry name" value="D-ALLOSE-BINDING PERIPLASMIC PROTEIN-RELATED"/>
    <property type="match status" value="1"/>
</dbReference>
<dbReference type="Pfam" id="PF13407">
    <property type="entry name" value="Peripla_BP_4"/>
    <property type="match status" value="1"/>
</dbReference>
<dbReference type="SUPFAM" id="SSF53822">
    <property type="entry name" value="Periplasmic binding protein-like I"/>
    <property type="match status" value="1"/>
</dbReference>
<name>LUXP_VIBVY</name>
<sequence length="366" mass="41348">MKKILLTCLLASASFQVSSHTSEVLSGYWAYQEFLEKFPQQGVLTRELSEVVRNAPVPLKSHQSKPIRISVVFPGQQISDYWVRNLSAFEKRMDKLQISYQINQVFTRPNADVKQQSVSLMEALKSKSDYLIFTLDTTRHRKFIEHVLDSSETKLILQNITTPVQAWDKRQPFLYVGFDHAEGSIALADKFKQLYPQGANYSVLYFSEGYVSDARGDTFIHQMNHSDRFALKSSFYTKATKASGYESAKNSLERYPDVDFIYACSTDVALGAIDALKELGRTNIKINGWGGGSAELDAIAVGDLDLTVMRMNDDTGIAMAEAIKWDIEGRTVPTVFSGDFEVVTKEDSPEHIELLKKRAFRYSDQP</sequence>
<proteinExistence type="inferred from homology"/>
<keyword id="KW-0574">Periplasm</keyword>
<keyword id="KW-0732">Signal</keyword>
<protein>
    <recommendedName>
        <fullName>Autoinducer 2-binding periplasmic protein LuxP</fullName>
    </recommendedName>
</protein>
<accession>Q7MD15</accession>